<name>Y457_ATV</name>
<reference key="1">
    <citation type="journal article" date="2005" name="Nature">
        <title>Virology: independent virus development outside a host.</title>
        <authorList>
            <person name="Haring M."/>
            <person name="Vestergaard G."/>
            <person name="Rachel R."/>
            <person name="Chen L."/>
            <person name="Garrett R.A."/>
            <person name="Prangishvili D."/>
        </authorList>
    </citation>
    <scope>NUCLEOTIDE SEQUENCE [GENOMIC DNA]</scope>
</reference>
<accession>Q3V4R9</accession>
<proteinExistence type="inferred from homology"/>
<evidence type="ECO:0000256" key="1">
    <source>
        <dbReference type="SAM" id="MobiDB-lite"/>
    </source>
</evidence>
<evidence type="ECO:0000305" key="2"/>
<sequence length="457" mass="53287">MPPSSGQLLGDEEREPTSTPAIPEEGVYKVKYSNRRTNIVRLLPNGFQERKLRRLADLSAKLFNEVNYERRQQFFHEGKVDIKGTYKKYYEKYKEKLRTNAQAVLNKNNEAWSSFFSLLNLKKEGKLPQHIKHVSPPGYCKDRKTKKRKLILIVRQDRYKVDAENNKLILKDFNMEIEFVGRLRWYGKQGRLEIIFDETRNAWYAHIPVEVGVEETGKKSKHVVKGERKSIQIAKPKGNKVASIDLGINVIASVVVSDGTWLLYKGIRTKEDYFYFHKRIAEVQSLADRTRNIGEYEAYLELLREERRLFKKLKRRLLHLYRNLASHLIKTLHELGVSTIYLGNPFNIVQEKGDNFMTDKWPYRKLMHAIELKAQEYGMKVYEVDEYNTTKYCAYHDVKVKRNPRGVVICPKGHKLHSDLNGALNILKKAVGVVVNEVKKPLSFIVDHNRVAPIKGV</sequence>
<feature type="chain" id="PRO_0000389030" description="TnpB-like protein ORF457">
    <location>
        <begin position="1"/>
        <end position="457"/>
    </location>
</feature>
<feature type="region of interest" description="Disordered" evidence="1">
    <location>
        <begin position="1"/>
        <end position="22"/>
    </location>
</feature>
<protein>
    <recommendedName>
        <fullName>TnpB-like protein ORF457</fullName>
    </recommendedName>
</protein>
<dbReference type="EMBL" id="AJ888457">
    <property type="protein sequence ID" value="CAI59895.1"/>
    <property type="molecule type" value="Genomic_DNA"/>
</dbReference>
<dbReference type="RefSeq" id="YP_319871.1">
    <property type="nucleotide sequence ID" value="NC_007409.1"/>
</dbReference>
<dbReference type="SMR" id="Q3V4R9"/>
<dbReference type="GeneID" id="4484251"/>
<dbReference type="KEGG" id="vg:4484251"/>
<dbReference type="OrthoDB" id="18731at10239"/>
<dbReference type="Proteomes" id="UP000002150">
    <property type="component" value="Genome"/>
</dbReference>
<dbReference type="GO" id="GO:0003677">
    <property type="term" value="F:DNA binding"/>
    <property type="evidence" value="ECO:0007669"/>
    <property type="project" value="UniProtKB-KW"/>
</dbReference>
<dbReference type="GO" id="GO:0006310">
    <property type="term" value="P:DNA recombination"/>
    <property type="evidence" value="ECO:0007669"/>
    <property type="project" value="UniProtKB-KW"/>
</dbReference>
<dbReference type="GO" id="GO:0032196">
    <property type="term" value="P:transposition"/>
    <property type="evidence" value="ECO:0007669"/>
    <property type="project" value="UniProtKB-KW"/>
</dbReference>
<dbReference type="InterPro" id="IPR010095">
    <property type="entry name" value="Cas12f1-like_TNB"/>
</dbReference>
<dbReference type="InterPro" id="IPR051399">
    <property type="entry name" value="RNA-guided_DNA_endo/Transpos"/>
</dbReference>
<dbReference type="InterPro" id="IPR001959">
    <property type="entry name" value="Transposase"/>
</dbReference>
<dbReference type="NCBIfam" id="NF040570">
    <property type="entry name" value="guided_TnpB"/>
    <property type="match status" value="1"/>
</dbReference>
<dbReference type="PANTHER" id="PTHR30405">
    <property type="entry name" value="TRANSPOSASE"/>
    <property type="match status" value="1"/>
</dbReference>
<dbReference type="PANTHER" id="PTHR30405:SF21">
    <property type="entry name" value="TRANSPOSASE-RELATED"/>
    <property type="match status" value="1"/>
</dbReference>
<dbReference type="Pfam" id="PF07282">
    <property type="entry name" value="Cas12f1-like_TNB"/>
    <property type="match status" value="1"/>
</dbReference>
<dbReference type="Pfam" id="PF01385">
    <property type="entry name" value="OrfB_IS605"/>
    <property type="match status" value="1"/>
</dbReference>
<organism>
    <name type="scientific">Acidianus two-tailed virus</name>
    <name type="common">ATV</name>
    <dbReference type="NCBI Taxonomy" id="315953"/>
    <lineage>
        <taxon>Viruses</taxon>
        <taxon>Viruses incertae sedis</taxon>
        <taxon>Bicaudaviridae</taxon>
        <taxon>Bicaudavirus</taxon>
    </lineage>
</organism>
<keyword id="KW-0233">DNA recombination</keyword>
<keyword id="KW-0238">DNA-binding</keyword>
<keyword id="KW-1185">Reference proteome</keyword>
<keyword id="KW-0815">Transposition</keyword>
<organismHost>
    <name type="scientific">Acidianus convivator</name>
    <dbReference type="NCBI Taxonomy" id="269667"/>
</organismHost>
<comment type="similarity">
    <text evidence="2">In the N-terminal section; belongs to the transposase 2 family.</text>
</comment>
<comment type="similarity">
    <text evidence="2">In the C-terminal section; belongs to the transposase 35 family.</text>
</comment>
<comment type="caution">
    <text evidence="2">Lacks the conserved Cys-residues found in other members of the transposase 35 family.</text>
</comment>